<dbReference type="EC" id="4.6.1.17" evidence="1"/>
<dbReference type="EMBL" id="CP000447">
    <property type="protein sequence ID" value="ABI69946.1"/>
    <property type="molecule type" value="Genomic_DNA"/>
</dbReference>
<dbReference type="RefSeq" id="WP_011635575.1">
    <property type="nucleotide sequence ID" value="NC_008345.1"/>
</dbReference>
<dbReference type="SMR" id="Q089W9"/>
<dbReference type="STRING" id="318167.Sfri_0083"/>
<dbReference type="KEGG" id="sfr:Sfri_0083"/>
<dbReference type="eggNOG" id="COG0315">
    <property type="taxonomic scope" value="Bacteria"/>
</dbReference>
<dbReference type="HOGENOM" id="CLU_074693_1_1_6"/>
<dbReference type="OrthoDB" id="9794429at2"/>
<dbReference type="UniPathway" id="UPA00344"/>
<dbReference type="Proteomes" id="UP000000684">
    <property type="component" value="Chromosome"/>
</dbReference>
<dbReference type="GO" id="GO:0061799">
    <property type="term" value="F:cyclic pyranopterin monophosphate synthase activity"/>
    <property type="evidence" value="ECO:0007669"/>
    <property type="project" value="UniProtKB-UniRule"/>
</dbReference>
<dbReference type="GO" id="GO:0061798">
    <property type="term" value="F:GTP 3',8'-cyclase activity"/>
    <property type="evidence" value="ECO:0007669"/>
    <property type="project" value="TreeGrafter"/>
</dbReference>
<dbReference type="GO" id="GO:0006777">
    <property type="term" value="P:Mo-molybdopterin cofactor biosynthetic process"/>
    <property type="evidence" value="ECO:0007669"/>
    <property type="project" value="UniProtKB-UniRule"/>
</dbReference>
<dbReference type="CDD" id="cd01420">
    <property type="entry name" value="MoaC_PE"/>
    <property type="match status" value="1"/>
</dbReference>
<dbReference type="FunFam" id="3.30.70.640:FF:000001">
    <property type="entry name" value="Cyclic pyranopterin monophosphate synthase"/>
    <property type="match status" value="1"/>
</dbReference>
<dbReference type="Gene3D" id="3.30.70.640">
    <property type="entry name" value="Molybdopterin cofactor biosynthesis C (MoaC) domain"/>
    <property type="match status" value="1"/>
</dbReference>
<dbReference type="HAMAP" id="MF_01224_B">
    <property type="entry name" value="MoaC_B"/>
    <property type="match status" value="1"/>
</dbReference>
<dbReference type="InterPro" id="IPR023045">
    <property type="entry name" value="MoaC"/>
</dbReference>
<dbReference type="InterPro" id="IPR047594">
    <property type="entry name" value="MoaC_bact/euk"/>
</dbReference>
<dbReference type="InterPro" id="IPR036522">
    <property type="entry name" value="MoaC_sf"/>
</dbReference>
<dbReference type="InterPro" id="IPR050105">
    <property type="entry name" value="MoCo_biosynth_MoaA/MoaC"/>
</dbReference>
<dbReference type="InterPro" id="IPR002820">
    <property type="entry name" value="Mopterin_CF_biosynth-C_dom"/>
</dbReference>
<dbReference type="NCBIfam" id="TIGR00581">
    <property type="entry name" value="moaC"/>
    <property type="match status" value="1"/>
</dbReference>
<dbReference type="NCBIfam" id="NF006870">
    <property type="entry name" value="PRK09364.1"/>
    <property type="match status" value="1"/>
</dbReference>
<dbReference type="PANTHER" id="PTHR22960:SF0">
    <property type="entry name" value="MOLYBDENUM COFACTOR BIOSYNTHESIS PROTEIN 1"/>
    <property type="match status" value="1"/>
</dbReference>
<dbReference type="PANTHER" id="PTHR22960">
    <property type="entry name" value="MOLYBDOPTERIN COFACTOR SYNTHESIS PROTEIN A"/>
    <property type="match status" value="1"/>
</dbReference>
<dbReference type="Pfam" id="PF01967">
    <property type="entry name" value="MoaC"/>
    <property type="match status" value="1"/>
</dbReference>
<dbReference type="SUPFAM" id="SSF55040">
    <property type="entry name" value="Molybdenum cofactor biosynthesis protein C, MoaC"/>
    <property type="match status" value="1"/>
</dbReference>
<reference key="1">
    <citation type="submission" date="2006-08" db="EMBL/GenBank/DDBJ databases">
        <title>Complete sequence of Shewanella frigidimarina NCIMB 400.</title>
        <authorList>
            <consortium name="US DOE Joint Genome Institute"/>
            <person name="Copeland A."/>
            <person name="Lucas S."/>
            <person name="Lapidus A."/>
            <person name="Barry K."/>
            <person name="Detter J.C."/>
            <person name="Glavina del Rio T."/>
            <person name="Hammon N."/>
            <person name="Israni S."/>
            <person name="Dalin E."/>
            <person name="Tice H."/>
            <person name="Pitluck S."/>
            <person name="Fredrickson J.K."/>
            <person name="Kolker E."/>
            <person name="McCuel L.A."/>
            <person name="DiChristina T."/>
            <person name="Nealson K.H."/>
            <person name="Newman D."/>
            <person name="Tiedje J.M."/>
            <person name="Zhou J."/>
            <person name="Romine M.F."/>
            <person name="Culley D.E."/>
            <person name="Serres M."/>
            <person name="Chertkov O."/>
            <person name="Brettin T."/>
            <person name="Bruce D."/>
            <person name="Han C."/>
            <person name="Tapia R."/>
            <person name="Gilna P."/>
            <person name="Schmutz J."/>
            <person name="Larimer F."/>
            <person name="Land M."/>
            <person name="Hauser L."/>
            <person name="Kyrpides N."/>
            <person name="Mikhailova N."/>
            <person name="Richardson P."/>
        </authorList>
    </citation>
    <scope>NUCLEOTIDE SEQUENCE [LARGE SCALE GENOMIC DNA]</scope>
    <source>
        <strain>NCIMB 400</strain>
    </source>
</reference>
<organism>
    <name type="scientific">Shewanella frigidimarina (strain NCIMB 400)</name>
    <dbReference type="NCBI Taxonomy" id="318167"/>
    <lineage>
        <taxon>Bacteria</taxon>
        <taxon>Pseudomonadati</taxon>
        <taxon>Pseudomonadota</taxon>
        <taxon>Gammaproteobacteria</taxon>
        <taxon>Alteromonadales</taxon>
        <taxon>Shewanellaceae</taxon>
        <taxon>Shewanella</taxon>
    </lineage>
</organism>
<feature type="chain" id="PRO_1000054136" description="Cyclic pyranopterin monophosphate synthase">
    <location>
        <begin position="1"/>
        <end position="158"/>
    </location>
</feature>
<feature type="active site" evidence="1">
    <location>
        <position position="129"/>
    </location>
</feature>
<feature type="binding site" evidence="1">
    <location>
        <begin position="76"/>
        <end position="78"/>
    </location>
    <ligand>
        <name>substrate</name>
    </ligand>
</feature>
<feature type="binding site" evidence="1">
    <location>
        <begin position="114"/>
        <end position="115"/>
    </location>
    <ligand>
        <name>substrate</name>
    </ligand>
</feature>
<name>MOAC_SHEFN</name>
<gene>
    <name evidence="1" type="primary">moaC</name>
    <name type="ordered locus">Sfri_0083</name>
</gene>
<evidence type="ECO:0000255" key="1">
    <source>
        <dbReference type="HAMAP-Rule" id="MF_01224"/>
    </source>
</evidence>
<protein>
    <recommendedName>
        <fullName evidence="1">Cyclic pyranopterin monophosphate synthase</fullName>
        <ecNumber evidence="1">4.6.1.17</ecNumber>
    </recommendedName>
    <alternativeName>
        <fullName evidence="1">Molybdenum cofactor biosynthesis protein C</fullName>
    </alternativeName>
</protein>
<proteinExistence type="inferred from homology"/>
<keyword id="KW-0456">Lyase</keyword>
<keyword id="KW-0501">Molybdenum cofactor biosynthesis</keyword>
<keyword id="KW-1185">Reference proteome</keyword>
<accession>Q089W9</accession>
<comment type="function">
    <text evidence="1">Catalyzes the conversion of (8S)-3',8-cyclo-7,8-dihydroguanosine 5'-triphosphate to cyclic pyranopterin monophosphate (cPMP).</text>
</comment>
<comment type="catalytic activity">
    <reaction evidence="1">
        <text>(8S)-3',8-cyclo-7,8-dihydroguanosine 5'-triphosphate = cyclic pyranopterin phosphate + diphosphate</text>
        <dbReference type="Rhea" id="RHEA:49580"/>
        <dbReference type="ChEBI" id="CHEBI:33019"/>
        <dbReference type="ChEBI" id="CHEBI:59648"/>
        <dbReference type="ChEBI" id="CHEBI:131766"/>
        <dbReference type="EC" id="4.6.1.17"/>
    </reaction>
</comment>
<comment type="pathway">
    <text evidence="1">Cofactor biosynthesis; molybdopterin biosynthesis.</text>
</comment>
<comment type="subunit">
    <text evidence="1">Homohexamer; trimer of dimers.</text>
</comment>
<comment type="similarity">
    <text evidence="1">Belongs to the MoaC family.</text>
</comment>
<sequence>MSNCFTHINADGNAHMVDVTEKAVTEREARAEAFIDMAPDTLAMIMNGSHHKGDVFATARIAGIQAAKKTSDLIPLCHPLMLTKVEVELEAQPEHNRVRITSLCKLSGKTGVEMEALTAASVAALTIYDMCKAVQKDMIISQVRLLEKRGGKSGHFKA</sequence>